<protein>
    <recommendedName>
        <fullName evidence="1">ATP-dependent Clp protease ATP-binding subunit ClpX</fullName>
    </recommendedName>
</protein>
<dbReference type="EMBL" id="CP000436">
    <property type="protein sequence ID" value="ABI25708.1"/>
    <property type="molecule type" value="Genomic_DNA"/>
</dbReference>
<dbReference type="SMR" id="Q0I4F0"/>
<dbReference type="KEGG" id="hso:HS_1433"/>
<dbReference type="eggNOG" id="COG1219">
    <property type="taxonomic scope" value="Bacteria"/>
</dbReference>
<dbReference type="HOGENOM" id="CLU_014218_8_2_6"/>
<dbReference type="GO" id="GO:0009376">
    <property type="term" value="C:HslUV protease complex"/>
    <property type="evidence" value="ECO:0007669"/>
    <property type="project" value="TreeGrafter"/>
</dbReference>
<dbReference type="GO" id="GO:0005524">
    <property type="term" value="F:ATP binding"/>
    <property type="evidence" value="ECO:0007669"/>
    <property type="project" value="UniProtKB-UniRule"/>
</dbReference>
<dbReference type="GO" id="GO:0016887">
    <property type="term" value="F:ATP hydrolysis activity"/>
    <property type="evidence" value="ECO:0007669"/>
    <property type="project" value="InterPro"/>
</dbReference>
<dbReference type="GO" id="GO:0140662">
    <property type="term" value="F:ATP-dependent protein folding chaperone"/>
    <property type="evidence" value="ECO:0007669"/>
    <property type="project" value="InterPro"/>
</dbReference>
<dbReference type="GO" id="GO:0046983">
    <property type="term" value="F:protein dimerization activity"/>
    <property type="evidence" value="ECO:0007669"/>
    <property type="project" value="InterPro"/>
</dbReference>
<dbReference type="GO" id="GO:0051082">
    <property type="term" value="F:unfolded protein binding"/>
    <property type="evidence" value="ECO:0007669"/>
    <property type="project" value="UniProtKB-UniRule"/>
</dbReference>
<dbReference type="GO" id="GO:0008270">
    <property type="term" value="F:zinc ion binding"/>
    <property type="evidence" value="ECO:0007669"/>
    <property type="project" value="InterPro"/>
</dbReference>
<dbReference type="GO" id="GO:0051301">
    <property type="term" value="P:cell division"/>
    <property type="evidence" value="ECO:0007669"/>
    <property type="project" value="TreeGrafter"/>
</dbReference>
<dbReference type="GO" id="GO:0051603">
    <property type="term" value="P:proteolysis involved in protein catabolic process"/>
    <property type="evidence" value="ECO:0007669"/>
    <property type="project" value="TreeGrafter"/>
</dbReference>
<dbReference type="CDD" id="cd19497">
    <property type="entry name" value="RecA-like_ClpX"/>
    <property type="match status" value="1"/>
</dbReference>
<dbReference type="FunFam" id="1.10.8.60:FF:000002">
    <property type="entry name" value="ATP-dependent Clp protease ATP-binding subunit ClpX"/>
    <property type="match status" value="1"/>
</dbReference>
<dbReference type="FunFam" id="3.40.50.300:FF:000005">
    <property type="entry name" value="ATP-dependent Clp protease ATP-binding subunit ClpX"/>
    <property type="match status" value="1"/>
</dbReference>
<dbReference type="Gene3D" id="1.10.8.60">
    <property type="match status" value="1"/>
</dbReference>
<dbReference type="Gene3D" id="6.20.220.10">
    <property type="entry name" value="ClpX chaperone, C4-type zinc finger domain"/>
    <property type="match status" value="1"/>
</dbReference>
<dbReference type="Gene3D" id="3.40.50.300">
    <property type="entry name" value="P-loop containing nucleotide triphosphate hydrolases"/>
    <property type="match status" value="1"/>
</dbReference>
<dbReference type="HAMAP" id="MF_00175">
    <property type="entry name" value="ClpX"/>
    <property type="match status" value="1"/>
</dbReference>
<dbReference type="InterPro" id="IPR003593">
    <property type="entry name" value="AAA+_ATPase"/>
</dbReference>
<dbReference type="InterPro" id="IPR050052">
    <property type="entry name" value="ATP-dep_Clp_protease_ClpX"/>
</dbReference>
<dbReference type="InterPro" id="IPR003959">
    <property type="entry name" value="ATPase_AAA_core"/>
</dbReference>
<dbReference type="InterPro" id="IPR019489">
    <property type="entry name" value="Clp_ATPase_C"/>
</dbReference>
<dbReference type="InterPro" id="IPR004487">
    <property type="entry name" value="Clp_protease_ATP-bd_su_ClpX"/>
</dbReference>
<dbReference type="InterPro" id="IPR046425">
    <property type="entry name" value="ClpX_bact"/>
</dbReference>
<dbReference type="InterPro" id="IPR027417">
    <property type="entry name" value="P-loop_NTPase"/>
</dbReference>
<dbReference type="InterPro" id="IPR010603">
    <property type="entry name" value="Znf_CppX_C4"/>
</dbReference>
<dbReference type="InterPro" id="IPR038366">
    <property type="entry name" value="Znf_CppX_C4_sf"/>
</dbReference>
<dbReference type="NCBIfam" id="TIGR00382">
    <property type="entry name" value="clpX"/>
    <property type="match status" value="1"/>
</dbReference>
<dbReference type="NCBIfam" id="NF003745">
    <property type="entry name" value="PRK05342.1"/>
    <property type="match status" value="1"/>
</dbReference>
<dbReference type="PANTHER" id="PTHR48102:SF7">
    <property type="entry name" value="ATP-DEPENDENT CLP PROTEASE ATP-BINDING SUBUNIT CLPX-LIKE, MITOCHONDRIAL"/>
    <property type="match status" value="1"/>
</dbReference>
<dbReference type="PANTHER" id="PTHR48102">
    <property type="entry name" value="ATP-DEPENDENT CLP PROTEASE ATP-BINDING SUBUNIT CLPX-LIKE, MITOCHONDRIAL-RELATED"/>
    <property type="match status" value="1"/>
</dbReference>
<dbReference type="Pfam" id="PF07724">
    <property type="entry name" value="AAA_2"/>
    <property type="match status" value="1"/>
</dbReference>
<dbReference type="Pfam" id="PF10431">
    <property type="entry name" value="ClpB_D2-small"/>
    <property type="match status" value="1"/>
</dbReference>
<dbReference type="Pfam" id="PF06689">
    <property type="entry name" value="zf-C4_ClpX"/>
    <property type="match status" value="1"/>
</dbReference>
<dbReference type="SMART" id="SM00382">
    <property type="entry name" value="AAA"/>
    <property type="match status" value="1"/>
</dbReference>
<dbReference type="SMART" id="SM01086">
    <property type="entry name" value="ClpB_D2-small"/>
    <property type="match status" value="1"/>
</dbReference>
<dbReference type="SMART" id="SM00994">
    <property type="entry name" value="zf-C4_ClpX"/>
    <property type="match status" value="1"/>
</dbReference>
<dbReference type="SUPFAM" id="SSF57716">
    <property type="entry name" value="Glucocorticoid receptor-like (DNA-binding domain)"/>
    <property type="match status" value="1"/>
</dbReference>
<dbReference type="SUPFAM" id="SSF52540">
    <property type="entry name" value="P-loop containing nucleoside triphosphate hydrolases"/>
    <property type="match status" value="1"/>
</dbReference>
<dbReference type="PROSITE" id="PS51902">
    <property type="entry name" value="CLPX_ZB"/>
    <property type="match status" value="1"/>
</dbReference>
<proteinExistence type="inferred from homology"/>
<comment type="function">
    <text evidence="1">ATP-dependent specificity component of the Clp protease. It directs the protease to specific substrates. Can perform chaperone functions in the absence of ClpP.</text>
</comment>
<comment type="subunit">
    <text evidence="1">Component of the ClpX-ClpP complex. Forms a hexameric ring that, in the presence of ATP, binds to fourteen ClpP subunits assembled into a disk-like structure with a central cavity, resembling the structure of eukaryotic proteasomes.</text>
</comment>
<comment type="similarity">
    <text evidence="1">Belongs to the ClpX chaperone family.</text>
</comment>
<name>CLPX_HISS1</name>
<gene>
    <name evidence="1" type="primary">clpX</name>
    <name type="ordered locus">HS_1433</name>
</gene>
<reference key="1">
    <citation type="journal article" date="2007" name="J. Bacteriol.">
        <title>Complete genome sequence of Haemophilus somnus (Histophilus somni) strain 129Pt and comparison to Haemophilus ducreyi 35000HP and Haemophilus influenzae Rd.</title>
        <authorList>
            <person name="Challacombe J.F."/>
            <person name="Duncan A.J."/>
            <person name="Brettin T.S."/>
            <person name="Bruce D."/>
            <person name="Chertkov O."/>
            <person name="Detter J.C."/>
            <person name="Han C.S."/>
            <person name="Misra M."/>
            <person name="Richardson P."/>
            <person name="Tapia R."/>
            <person name="Thayer N."/>
            <person name="Xie G."/>
            <person name="Inzana T.J."/>
        </authorList>
    </citation>
    <scope>NUCLEOTIDE SEQUENCE [LARGE SCALE GENOMIC DNA]</scope>
    <source>
        <strain>129Pt</strain>
    </source>
</reference>
<evidence type="ECO:0000255" key="1">
    <source>
        <dbReference type="HAMAP-Rule" id="MF_00175"/>
    </source>
</evidence>
<evidence type="ECO:0000255" key="2">
    <source>
        <dbReference type="PROSITE-ProRule" id="PRU01250"/>
    </source>
</evidence>
<sequence>MTKEKELHCSFCGKEQKEVDKLIAGTSGYICNECIELCHDMLANADDIEEIDEEFQEEEPKLPTPHEIRAHLDDYVIGQDYAKKVLAVAVYNHYKRLRSEKNTSEVELGKSNILLIGPTGSGKTLLAQTLARMLNVPFAMADATTLTEAGYVGEDVENVLQKLLQNCDYDIEKAQQGIIYIDEIDKITRKSENPSITRDVSGEGVQQALLKLVEGTVASIPPQGGRKHPQQEMLRVDTSKILFICGGAFAGLDKIIEKRTNTGGKGIGFGADVRIDEEKVSLTELFKQVEPDDLMKFGLIPEFIGRLPVIAPLSELDEEALVKILTEPKNALTKQYQVLFSLENIELEFTQEALIAMAKKALARKTGARGLRSIVETLLLDTMYDLPSIENLQKVIVEEETVTENKAPVLKFNS</sequence>
<organism>
    <name type="scientific">Histophilus somni (strain 129Pt)</name>
    <name type="common">Haemophilus somnus</name>
    <dbReference type="NCBI Taxonomy" id="205914"/>
    <lineage>
        <taxon>Bacteria</taxon>
        <taxon>Pseudomonadati</taxon>
        <taxon>Pseudomonadota</taxon>
        <taxon>Gammaproteobacteria</taxon>
        <taxon>Pasteurellales</taxon>
        <taxon>Pasteurellaceae</taxon>
        <taxon>Histophilus</taxon>
    </lineage>
</organism>
<accession>Q0I4F0</accession>
<feature type="chain" id="PRO_1000024564" description="ATP-dependent Clp protease ATP-binding subunit ClpX">
    <location>
        <begin position="1"/>
        <end position="414"/>
    </location>
</feature>
<feature type="domain" description="ClpX-type ZB" evidence="2">
    <location>
        <begin position="1"/>
        <end position="50"/>
    </location>
</feature>
<feature type="binding site" evidence="2">
    <location>
        <position position="9"/>
    </location>
    <ligand>
        <name>Zn(2+)</name>
        <dbReference type="ChEBI" id="CHEBI:29105"/>
    </ligand>
</feature>
<feature type="binding site" evidence="2">
    <location>
        <position position="12"/>
    </location>
    <ligand>
        <name>Zn(2+)</name>
        <dbReference type="ChEBI" id="CHEBI:29105"/>
    </ligand>
</feature>
<feature type="binding site" evidence="2">
    <location>
        <position position="31"/>
    </location>
    <ligand>
        <name>Zn(2+)</name>
        <dbReference type="ChEBI" id="CHEBI:29105"/>
    </ligand>
</feature>
<feature type="binding site" evidence="2">
    <location>
        <position position="34"/>
    </location>
    <ligand>
        <name>Zn(2+)</name>
        <dbReference type="ChEBI" id="CHEBI:29105"/>
    </ligand>
</feature>
<feature type="binding site" evidence="1">
    <location>
        <begin position="118"/>
        <end position="125"/>
    </location>
    <ligand>
        <name>ATP</name>
        <dbReference type="ChEBI" id="CHEBI:30616"/>
    </ligand>
</feature>
<keyword id="KW-0067">ATP-binding</keyword>
<keyword id="KW-0143">Chaperone</keyword>
<keyword id="KW-0479">Metal-binding</keyword>
<keyword id="KW-0547">Nucleotide-binding</keyword>
<keyword id="KW-0862">Zinc</keyword>